<proteinExistence type="inferred from homology"/>
<protein>
    <recommendedName>
        <fullName evidence="1">HPr kinase/phosphorylase</fullName>
        <shortName evidence="1">HPrK/P</shortName>
        <ecNumber evidence="1">2.7.11.-</ecNumber>
        <ecNumber evidence="1">2.7.4.-</ecNumber>
    </recommendedName>
    <alternativeName>
        <fullName evidence="1">HPr(Ser) kinase/phosphorylase</fullName>
    </alternativeName>
</protein>
<keyword id="KW-0067">ATP-binding</keyword>
<keyword id="KW-0418">Kinase</keyword>
<keyword id="KW-0460">Magnesium</keyword>
<keyword id="KW-0479">Metal-binding</keyword>
<keyword id="KW-0511">Multifunctional enzyme</keyword>
<keyword id="KW-0547">Nucleotide-binding</keyword>
<keyword id="KW-1185">Reference proteome</keyword>
<keyword id="KW-0723">Serine/threonine-protein kinase</keyword>
<keyword id="KW-0808">Transferase</keyword>
<reference key="1">
    <citation type="journal article" date="2004" name="Proc. Natl. Acad. Sci. U.S.A.">
        <title>Genomic plasticity of the causative agent of melioidosis, Burkholderia pseudomallei.</title>
        <authorList>
            <person name="Holden M.T.G."/>
            <person name="Titball R.W."/>
            <person name="Peacock S.J."/>
            <person name="Cerdeno-Tarraga A.-M."/>
            <person name="Atkins T."/>
            <person name="Crossman L.C."/>
            <person name="Pitt T."/>
            <person name="Churcher C."/>
            <person name="Mungall K.L."/>
            <person name="Bentley S.D."/>
            <person name="Sebaihia M."/>
            <person name="Thomson N.R."/>
            <person name="Bason N."/>
            <person name="Beacham I.R."/>
            <person name="Brooks K."/>
            <person name="Brown K.A."/>
            <person name="Brown N.F."/>
            <person name="Challis G.L."/>
            <person name="Cherevach I."/>
            <person name="Chillingworth T."/>
            <person name="Cronin A."/>
            <person name="Crossett B."/>
            <person name="Davis P."/>
            <person name="DeShazer D."/>
            <person name="Feltwell T."/>
            <person name="Fraser A."/>
            <person name="Hance Z."/>
            <person name="Hauser H."/>
            <person name="Holroyd S."/>
            <person name="Jagels K."/>
            <person name="Keith K.E."/>
            <person name="Maddison M."/>
            <person name="Moule S."/>
            <person name="Price C."/>
            <person name="Quail M.A."/>
            <person name="Rabbinowitsch E."/>
            <person name="Rutherford K."/>
            <person name="Sanders M."/>
            <person name="Simmonds M."/>
            <person name="Songsivilai S."/>
            <person name="Stevens K."/>
            <person name="Tumapa S."/>
            <person name="Vesaratchavest M."/>
            <person name="Whitehead S."/>
            <person name="Yeats C."/>
            <person name="Barrell B.G."/>
            <person name="Oyston P.C.F."/>
            <person name="Parkhill J."/>
        </authorList>
    </citation>
    <scope>NUCLEOTIDE SEQUENCE [LARGE SCALE GENOMIC DNA]</scope>
    <source>
        <strain>K96243</strain>
    </source>
</reference>
<organism>
    <name type="scientific">Burkholderia pseudomallei (strain K96243)</name>
    <dbReference type="NCBI Taxonomy" id="272560"/>
    <lineage>
        <taxon>Bacteria</taxon>
        <taxon>Pseudomonadati</taxon>
        <taxon>Pseudomonadota</taxon>
        <taxon>Betaproteobacteria</taxon>
        <taxon>Burkholderiales</taxon>
        <taxon>Burkholderiaceae</taxon>
        <taxon>Burkholderia</taxon>
        <taxon>pseudomallei group</taxon>
    </lineage>
</organism>
<evidence type="ECO:0000255" key="1">
    <source>
        <dbReference type="HAMAP-Rule" id="MF_01249"/>
    </source>
</evidence>
<dbReference type="EC" id="2.7.11.-" evidence="1"/>
<dbReference type="EC" id="2.7.4.-" evidence="1"/>
<dbReference type="EMBL" id="BX571965">
    <property type="protein sequence ID" value="CAH34519.1"/>
    <property type="molecule type" value="Genomic_DNA"/>
</dbReference>
<dbReference type="RefSeq" id="WP_004195225.1">
    <property type="nucleotide sequence ID" value="NZ_CP009538.1"/>
</dbReference>
<dbReference type="RefSeq" id="YP_107155.1">
    <property type="nucleotide sequence ID" value="NC_006350.1"/>
</dbReference>
<dbReference type="SMR" id="Q63XL0"/>
<dbReference type="STRING" id="272560.BPSL0530"/>
<dbReference type="GeneID" id="93059051"/>
<dbReference type="KEGG" id="bps:BPSL0530"/>
<dbReference type="PATRIC" id="fig|272560.51.peg.1118"/>
<dbReference type="eggNOG" id="COG1493">
    <property type="taxonomic scope" value="Bacteria"/>
</dbReference>
<dbReference type="Proteomes" id="UP000000605">
    <property type="component" value="Chromosome 1"/>
</dbReference>
<dbReference type="GO" id="GO:0005524">
    <property type="term" value="F:ATP binding"/>
    <property type="evidence" value="ECO:0007669"/>
    <property type="project" value="UniProtKB-UniRule"/>
</dbReference>
<dbReference type="GO" id="GO:0000287">
    <property type="term" value="F:magnesium ion binding"/>
    <property type="evidence" value="ECO:0007669"/>
    <property type="project" value="UniProtKB-UniRule"/>
</dbReference>
<dbReference type="GO" id="GO:0000155">
    <property type="term" value="F:phosphorelay sensor kinase activity"/>
    <property type="evidence" value="ECO:0007669"/>
    <property type="project" value="InterPro"/>
</dbReference>
<dbReference type="GO" id="GO:0004674">
    <property type="term" value="F:protein serine/threonine kinase activity"/>
    <property type="evidence" value="ECO:0007669"/>
    <property type="project" value="UniProtKB-KW"/>
</dbReference>
<dbReference type="GO" id="GO:0004712">
    <property type="term" value="F:protein serine/threonine/tyrosine kinase activity"/>
    <property type="evidence" value="ECO:0007669"/>
    <property type="project" value="UniProtKB-UniRule"/>
</dbReference>
<dbReference type="GO" id="GO:0006109">
    <property type="term" value="P:regulation of carbohydrate metabolic process"/>
    <property type="evidence" value="ECO:0007669"/>
    <property type="project" value="UniProtKB-UniRule"/>
</dbReference>
<dbReference type="CDD" id="cd01918">
    <property type="entry name" value="HprK_C"/>
    <property type="match status" value="1"/>
</dbReference>
<dbReference type="FunFam" id="3.40.50.300:FF:000174">
    <property type="entry name" value="HPr kinase/phosphorylase"/>
    <property type="match status" value="1"/>
</dbReference>
<dbReference type="Gene3D" id="3.40.1390.20">
    <property type="entry name" value="HprK N-terminal domain-like"/>
    <property type="match status" value="1"/>
</dbReference>
<dbReference type="Gene3D" id="3.40.50.300">
    <property type="entry name" value="P-loop containing nucleotide triphosphate hydrolases"/>
    <property type="match status" value="1"/>
</dbReference>
<dbReference type="HAMAP" id="MF_01249">
    <property type="entry name" value="HPr_kinase"/>
    <property type="match status" value="1"/>
</dbReference>
<dbReference type="InterPro" id="IPR003755">
    <property type="entry name" value="HPr(Ser)_kin/Pase"/>
</dbReference>
<dbReference type="InterPro" id="IPR011104">
    <property type="entry name" value="Hpr_kin/Pase_C"/>
</dbReference>
<dbReference type="InterPro" id="IPR011126">
    <property type="entry name" value="Hpr_kin/Pase_Hpr_N"/>
</dbReference>
<dbReference type="InterPro" id="IPR027417">
    <property type="entry name" value="P-loop_NTPase"/>
</dbReference>
<dbReference type="InterPro" id="IPR028979">
    <property type="entry name" value="Ser_kin/Pase_Hpr-like_N_sf"/>
</dbReference>
<dbReference type="NCBIfam" id="TIGR00679">
    <property type="entry name" value="hpr-ser"/>
    <property type="match status" value="1"/>
</dbReference>
<dbReference type="PANTHER" id="PTHR30305:SF1">
    <property type="entry name" value="HPR KINASE_PHOSPHORYLASE"/>
    <property type="match status" value="1"/>
</dbReference>
<dbReference type="PANTHER" id="PTHR30305">
    <property type="entry name" value="PROTEIN YJDM-RELATED"/>
    <property type="match status" value="1"/>
</dbReference>
<dbReference type="Pfam" id="PF07475">
    <property type="entry name" value="Hpr_kinase_C"/>
    <property type="match status" value="1"/>
</dbReference>
<dbReference type="Pfam" id="PF02603">
    <property type="entry name" value="Hpr_kinase_N"/>
    <property type="match status" value="1"/>
</dbReference>
<dbReference type="SUPFAM" id="SSF75138">
    <property type="entry name" value="HprK N-terminal domain-like"/>
    <property type="match status" value="1"/>
</dbReference>
<dbReference type="SUPFAM" id="SSF53795">
    <property type="entry name" value="PEP carboxykinase-like"/>
    <property type="match status" value="1"/>
</dbReference>
<feature type="chain" id="PRO_1000067137" description="HPr kinase/phosphorylase">
    <location>
        <begin position="1"/>
        <end position="322"/>
    </location>
</feature>
<feature type="region of interest" description="Important for the catalytic mechanism of both phosphorylation and dephosphorylation" evidence="1">
    <location>
        <begin position="209"/>
        <end position="218"/>
    </location>
</feature>
<feature type="region of interest" description="Important for the catalytic mechanism of dephosphorylation" evidence="1">
    <location>
        <begin position="271"/>
        <end position="276"/>
    </location>
</feature>
<feature type="active site" evidence="1">
    <location>
        <position position="146"/>
    </location>
</feature>
<feature type="active site" evidence="1">
    <location>
        <position position="167"/>
    </location>
</feature>
<feature type="active site" description="Proton acceptor; for phosphorylation activity. Proton donor; for dephosphorylation activity" evidence="1">
    <location>
        <position position="185"/>
    </location>
</feature>
<feature type="active site" evidence="1">
    <location>
        <position position="250"/>
    </location>
</feature>
<feature type="binding site" evidence="1">
    <location>
        <begin position="161"/>
        <end position="168"/>
    </location>
    <ligand>
        <name>ATP</name>
        <dbReference type="ChEBI" id="CHEBI:30616"/>
    </ligand>
</feature>
<feature type="binding site" evidence="1">
    <location>
        <position position="168"/>
    </location>
    <ligand>
        <name>Mg(2+)</name>
        <dbReference type="ChEBI" id="CHEBI:18420"/>
    </ligand>
</feature>
<feature type="binding site" evidence="1">
    <location>
        <position position="210"/>
    </location>
    <ligand>
        <name>Mg(2+)</name>
        <dbReference type="ChEBI" id="CHEBI:18420"/>
    </ligand>
</feature>
<comment type="function">
    <text evidence="1">Catalyzes the ATP- as well as the pyrophosphate-dependent phosphorylation of a specific serine residue in HPr, a phosphocarrier protein of the phosphoenolpyruvate-dependent sugar phosphotransferase system (PTS). HprK/P also catalyzes the pyrophosphate-producing, inorganic phosphate-dependent dephosphorylation (phosphorolysis) of seryl-phosphorylated HPr (P-Ser-HPr).</text>
</comment>
<comment type="catalytic activity">
    <reaction evidence="1">
        <text>[HPr protein]-L-serine + ATP = [HPr protein]-O-phospho-L-serine + ADP + H(+)</text>
        <dbReference type="Rhea" id="RHEA:46600"/>
        <dbReference type="Rhea" id="RHEA-COMP:11602"/>
        <dbReference type="Rhea" id="RHEA-COMP:11603"/>
        <dbReference type="ChEBI" id="CHEBI:15378"/>
        <dbReference type="ChEBI" id="CHEBI:29999"/>
        <dbReference type="ChEBI" id="CHEBI:30616"/>
        <dbReference type="ChEBI" id="CHEBI:83421"/>
        <dbReference type="ChEBI" id="CHEBI:456216"/>
    </reaction>
</comment>
<comment type="catalytic activity">
    <reaction evidence="1">
        <text>[HPr protein]-O-phospho-L-serine + phosphate + H(+) = [HPr protein]-L-serine + diphosphate</text>
        <dbReference type="Rhea" id="RHEA:46604"/>
        <dbReference type="Rhea" id="RHEA-COMP:11602"/>
        <dbReference type="Rhea" id="RHEA-COMP:11603"/>
        <dbReference type="ChEBI" id="CHEBI:15378"/>
        <dbReference type="ChEBI" id="CHEBI:29999"/>
        <dbReference type="ChEBI" id="CHEBI:33019"/>
        <dbReference type="ChEBI" id="CHEBI:43474"/>
        <dbReference type="ChEBI" id="CHEBI:83421"/>
    </reaction>
</comment>
<comment type="cofactor">
    <cofactor evidence="1">
        <name>Mg(2+)</name>
        <dbReference type="ChEBI" id="CHEBI:18420"/>
    </cofactor>
</comment>
<comment type="subunit">
    <text evidence="1">Homohexamer.</text>
</comment>
<comment type="domain">
    <text evidence="1">The Walker A ATP-binding motif also binds Pi and PPi.</text>
</comment>
<comment type="miscellaneous">
    <text evidence="1">Both phosphorylation and phosphorolysis are carried out by the same active site and suggest a common mechanism for both reactions.</text>
</comment>
<comment type="similarity">
    <text evidence="1">Belongs to the HPrK/P family.</text>
</comment>
<accession>Q63XL0</accession>
<name>HPRK_BURPS</name>
<sequence length="322" mass="35165">MDTSSINAQSIFDDNAAMLKLSWLTGHEGWERGFSADTVANATSSADLVGHLNLIHPNRIQVLGEAEIDYYQRQTDEDRSRHMAELIALEPPFLVVAGGAAAPPELVLRCTRSSTPLFTTPMSAAAVIDSLRLYMSRILAPRATLHGVFLDILGMGVLLTGDSGLGKSELGLELISRGHGLVADDAVDFVRLGPDFVEGRCPPLLQNLLEVRGLGLLDIKTIFGETAVRRKMKLKLIVQLVRRPDGEFQRLPLESQTVDVLGLPISKVTIQVAAGRNLAVLVEAAVRNTILQLRGIDTLRDFMDRQRLAMQDPDSQFPGKLV</sequence>
<gene>
    <name evidence="1" type="primary">hprK</name>
    <name type="ordered locus">BPSL0530</name>
</gene>